<name>RUVC_ERWT9</name>
<feature type="chain" id="PRO_1000090525" description="Crossover junction endodeoxyribonuclease RuvC">
    <location>
        <begin position="1"/>
        <end position="173"/>
    </location>
</feature>
<feature type="active site" evidence="1">
    <location>
        <position position="8"/>
    </location>
</feature>
<feature type="active site" evidence="1">
    <location>
        <position position="67"/>
    </location>
</feature>
<feature type="active site" evidence="1">
    <location>
        <position position="139"/>
    </location>
</feature>
<feature type="binding site" evidence="1">
    <location>
        <position position="8"/>
    </location>
    <ligand>
        <name>Mg(2+)</name>
        <dbReference type="ChEBI" id="CHEBI:18420"/>
        <label>1</label>
    </ligand>
</feature>
<feature type="binding site" evidence="1">
    <location>
        <position position="67"/>
    </location>
    <ligand>
        <name>Mg(2+)</name>
        <dbReference type="ChEBI" id="CHEBI:18420"/>
        <label>2</label>
    </ligand>
</feature>
<feature type="binding site" evidence="1">
    <location>
        <position position="139"/>
    </location>
    <ligand>
        <name>Mg(2+)</name>
        <dbReference type="ChEBI" id="CHEBI:18420"/>
        <label>1</label>
    </ligand>
</feature>
<protein>
    <recommendedName>
        <fullName evidence="1">Crossover junction endodeoxyribonuclease RuvC</fullName>
        <ecNumber evidence="1">3.1.21.10</ecNumber>
    </recommendedName>
    <alternativeName>
        <fullName evidence="1">Holliday junction nuclease RuvC</fullName>
    </alternativeName>
    <alternativeName>
        <fullName evidence="1">Holliday junction resolvase RuvC</fullName>
    </alternativeName>
</protein>
<proteinExistence type="inferred from homology"/>
<sequence length="173" mass="18600">MAIILGIDPGSRITGYGVIRQTGRQLTYLGSGCIRTSVTDLPSRLKLIYAGVSEIITQFQPEYFAIEQVFMAKNADSALKLGQARGAAIVAAVNQDLPVFEYAARQVKQTVVGIGSAEKSQVQHMVRTLLKLPANPQADAADALAIAITHCHLSQNVTRLGEGNLNLARGRLR</sequence>
<evidence type="ECO:0000255" key="1">
    <source>
        <dbReference type="HAMAP-Rule" id="MF_00034"/>
    </source>
</evidence>
<keyword id="KW-0963">Cytoplasm</keyword>
<keyword id="KW-0227">DNA damage</keyword>
<keyword id="KW-0233">DNA recombination</keyword>
<keyword id="KW-0234">DNA repair</keyword>
<keyword id="KW-0238">DNA-binding</keyword>
<keyword id="KW-0255">Endonuclease</keyword>
<keyword id="KW-0378">Hydrolase</keyword>
<keyword id="KW-0460">Magnesium</keyword>
<keyword id="KW-0479">Metal-binding</keyword>
<keyword id="KW-0540">Nuclease</keyword>
<keyword id="KW-1185">Reference proteome</keyword>
<organism>
    <name type="scientific">Erwinia tasmaniensis (strain DSM 17950 / CFBP 7177 / CIP 109463 / NCPPB 4357 / Et1/99)</name>
    <dbReference type="NCBI Taxonomy" id="465817"/>
    <lineage>
        <taxon>Bacteria</taxon>
        <taxon>Pseudomonadati</taxon>
        <taxon>Pseudomonadota</taxon>
        <taxon>Gammaproteobacteria</taxon>
        <taxon>Enterobacterales</taxon>
        <taxon>Erwiniaceae</taxon>
        <taxon>Erwinia</taxon>
    </lineage>
</organism>
<dbReference type="EC" id="3.1.21.10" evidence="1"/>
<dbReference type="EMBL" id="CU468135">
    <property type="protein sequence ID" value="CAO96534.1"/>
    <property type="molecule type" value="Genomic_DNA"/>
</dbReference>
<dbReference type="RefSeq" id="WP_012441228.1">
    <property type="nucleotide sequence ID" value="NC_010694.1"/>
</dbReference>
<dbReference type="SMR" id="B2VJ93"/>
<dbReference type="STRING" id="465817.ETA_14880"/>
<dbReference type="KEGG" id="eta:ETA_14880"/>
<dbReference type="eggNOG" id="COG0817">
    <property type="taxonomic scope" value="Bacteria"/>
</dbReference>
<dbReference type="HOGENOM" id="CLU_091257_2_1_6"/>
<dbReference type="OrthoDB" id="9805499at2"/>
<dbReference type="Proteomes" id="UP000001726">
    <property type="component" value="Chromosome"/>
</dbReference>
<dbReference type="GO" id="GO:0005737">
    <property type="term" value="C:cytoplasm"/>
    <property type="evidence" value="ECO:0007669"/>
    <property type="project" value="UniProtKB-SubCell"/>
</dbReference>
<dbReference type="GO" id="GO:0048476">
    <property type="term" value="C:Holliday junction resolvase complex"/>
    <property type="evidence" value="ECO:0007669"/>
    <property type="project" value="UniProtKB-UniRule"/>
</dbReference>
<dbReference type="GO" id="GO:0008821">
    <property type="term" value="F:crossover junction DNA endonuclease activity"/>
    <property type="evidence" value="ECO:0007669"/>
    <property type="project" value="UniProtKB-UniRule"/>
</dbReference>
<dbReference type="GO" id="GO:0003677">
    <property type="term" value="F:DNA binding"/>
    <property type="evidence" value="ECO:0007669"/>
    <property type="project" value="UniProtKB-KW"/>
</dbReference>
<dbReference type="GO" id="GO:0000287">
    <property type="term" value="F:magnesium ion binding"/>
    <property type="evidence" value="ECO:0007669"/>
    <property type="project" value="UniProtKB-UniRule"/>
</dbReference>
<dbReference type="GO" id="GO:0006310">
    <property type="term" value="P:DNA recombination"/>
    <property type="evidence" value="ECO:0007669"/>
    <property type="project" value="UniProtKB-UniRule"/>
</dbReference>
<dbReference type="GO" id="GO:0006281">
    <property type="term" value="P:DNA repair"/>
    <property type="evidence" value="ECO:0007669"/>
    <property type="project" value="UniProtKB-UniRule"/>
</dbReference>
<dbReference type="CDD" id="cd16962">
    <property type="entry name" value="RuvC"/>
    <property type="match status" value="1"/>
</dbReference>
<dbReference type="FunFam" id="3.30.420.10:FF:000002">
    <property type="entry name" value="Crossover junction endodeoxyribonuclease RuvC"/>
    <property type="match status" value="1"/>
</dbReference>
<dbReference type="Gene3D" id="3.30.420.10">
    <property type="entry name" value="Ribonuclease H-like superfamily/Ribonuclease H"/>
    <property type="match status" value="1"/>
</dbReference>
<dbReference type="HAMAP" id="MF_00034">
    <property type="entry name" value="RuvC"/>
    <property type="match status" value="1"/>
</dbReference>
<dbReference type="InterPro" id="IPR012337">
    <property type="entry name" value="RNaseH-like_sf"/>
</dbReference>
<dbReference type="InterPro" id="IPR036397">
    <property type="entry name" value="RNaseH_sf"/>
</dbReference>
<dbReference type="InterPro" id="IPR020563">
    <property type="entry name" value="X-over_junc_endoDNase_Mg_BS"/>
</dbReference>
<dbReference type="InterPro" id="IPR002176">
    <property type="entry name" value="X-over_junc_endoDNase_RuvC"/>
</dbReference>
<dbReference type="NCBIfam" id="NF000711">
    <property type="entry name" value="PRK00039.2-1"/>
    <property type="match status" value="1"/>
</dbReference>
<dbReference type="NCBIfam" id="TIGR00228">
    <property type="entry name" value="ruvC"/>
    <property type="match status" value="1"/>
</dbReference>
<dbReference type="PANTHER" id="PTHR30194">
    <property type="entry name" value="CROSSOVER JUNCTION ENDODEOXYRIBONUCLEASE RUVC"/>
    <property type="match status" value="1"/>
</dbReference>
<dbReference type="PANTHER" id="PTHR30194:SF3">
    <property type="entry name" value="CROSSOVER JUNCTION ENDODEOXYRIBONUCLEASE RUVC"/>
    <property type="match status" value="1"/>
</dbReference>
<dbReference type="Pfam" id="PF02075">
    <property type="entry name" value="RuvC"/>
    <property type="match status" value="1"/>
</dbReference>
<dbReference type="PRINTS" id="PR00696">
    <property type="entry name" value="RSOLVASERUVC"/>
</dbReference>
<dbReference type="SUPFAM" id="SSF53098">
    <property type="entry name" value="Ribonuclease H-like"/>
    <property type="match status" value="1"/>
</dbReference>
<dbReference type="PROSITE" id="PS01321">
    <property type="entry name" value="RUVC"/>
    <property type="match status" value="1"/>
</dbReference>
<accession>B2VJ93</accession>
<comment type="function">
    <text evidence="1">The RuvA-RuvB-RuvC complex processes Holliday junction (HJ) DNA during genetic recombination and DNA repair. Endonuclease that resolves HJ intermediates. Cleaves cruciform DNA by making single-stranded nicks across the HJ at symmetrical positions within the homologous arms, yielding a 5'-phosphate and a 3'-hydroxyl group; requires a central core of homology in the junction. The consensus cleavage sequence is 5'-(A/T)TT(C/G)-3'. Cleavage occurs on the 3'-side of the TT dinucleotide at the point of strand exchange. HJ branch migration catalyzed by RuvA-RuvB allows RuvC to scan DNA until it finds its consensus sequence, where it cleaves and resolves the cruciform DNA.</text>
</comment>
<comment type="catalytic activity">
    <reaction evidence="1">
        <text>Endonucleolytic cleavage at a junction such as a reciprocal single-stranded crossover between two homologous DNA duplexes (Holliday junction).</text>
        <dbReference type="EC" id="3.1.21.10"/>
    </reaction>
</comment>
<comment type="cofactor">
    <cofactor evidence="1">
        <name>Mg(2+)</name>
        <dbReference type="ChEBI" id="CHEBI:18420"/>
    </cofactor>
    <text evidence="1">Binds 2 Mg(2+) ion per subunit.</text>
</comment>
<comment type="subunit">
    <text evidence="1">Homodimer which binds Holliday junction (HJ) DNA. The HJ becomes 2-fold symmetrical on binding to RuvC with unstacked arms; it has a different conformation from HJ DNA in complex with RuvA. In the full resolvosome a probable DNA-RuvA(4)-RuvB(12)-RuvC(2) complex forms which resolves the HJ.</text>
</comment>
<comment type="subcellular location">
    <subcellularLocation>
        <location evidence="1">Cytoplasm</location>
    </subcellularLocation>
</comment>
<comment type="similarity">
    <text evidence="1">Belongs to the RuvC family.</text>
</comment>
<reference key="1">
    <citation type="journal article" date="2008" name="Environ. Microbiol.">
        <title>The genome of Erwinia tasmaniensis strain Et1/99, a non-pathogenic bacterium in the genus Erwinia.</title>
        <authorList>
            <person name="Kube M."/>
            <person name="Migdoll A.M."/>
            <person name="Mueller I."/>
            <person name="Kuhl H."/>
            <person name="Beck A."/>
            <person name="Reinhardt R."/>
            <person name="Geider K."/>
        </authorList>
    </citation>
    <scope>NUCLEOTIDE SEQUENCE [LARGE SCALE GENOMIC DNA]</scope>
    <source>
        <strain>DSM 17950 / CFBP 7177 / CIP 109463 / NCPPB 4357 / Et1/99</strain>
    </source>
</reference>
<gene>
    <name evidence="1" type="primary">ruvC</name>
    <name type="ordered locus">ETA_14880</name>
</gene>